<name>WHIA_LACDA</name>
<evidence type="ECO:0000255" key="1">
    <source>
        <dbReference type="HAMAP-Rule" id="MF_01420"/>
    </source>
</evidence>
<organism>
    <name type="scientific">Lactobacillus delbrueckii subsp. bulgaricus (strain ATCC 11842 / DSM 20081 / BCRC 10696 / JCM 1002 / NBRC 13953 / NCIMB 11778 / NCTC 12712 / WDCM 00102 / Lb 14)</name>
    <dbReference type="NCBI Taxonomy" id="390333"/>
    <lineage>
        <taxon>Bacteria</taxon>
        <taxon>Bacillati</taxon>
        <taxon>Bacillota</taxon>
        <taxon>Bacilli</taxon>
        <taxon>Lactobacillales</taxon>
        <taxon>Lactobacillaceae</taxon>
        <taxon>Lactobacillus</taxon>
    </lineage>
</organism>
<proteinExistence type="inferred from homology"/>
<reference key="1">
    <citation type="journal article" date="2006" name="Proc. Natl. Acad. Sci. U.S.A.">
        <title>The complete genome sequence of Lactobacillus bulgaricus reveals extensive and ongoing reductive evolution.</title>
        <authorList>
            <person name="van de Guchte M."/>
            <person name="Penaud S."/>
            <person name="Grimaldi C."/>
            <person name="Barbe V."/>
            <person name="Bryson K."/>
            <person name="Nicolas P."/>
            <person name="Robert C."/>
            <person name="Oztas S."/>
            <person name="Mangenot S."/>
            <person name="Couloux A."/>
            <person name="Loux V."/>
            <person name="Dervyn R."/>
            <person name="Bossy R."/>
            <person name="Bolotin A."/>
            <person name="Batto J.-M."/>
            <person name="Walunas T."/>
            <person name="Gibrat J.-F."/>
            <person name="Bessieres P."/>
            <person name="Weissenbach J."/>
            <person name="Ehrlich S.D."/>
            <person name="Maguin E."/>
        </authorList>
    </citation>
    <scope>NUCLEOTIDE SEQUENCE [LARGE SCALE GENOMIC DNA]</scope>
    <source>
        <strain>ATCC 11842 / DSM 20081 / BCRC 10696 / JCM 1002 / NBRC 13953 / NCIMB 11778 / NCTC 12712 / WDCM 00102 / Lb 14</strain>
    </source>
</reference>
<keyword id="KW-0131">Cell cycle</keyword>
<keyword id="KW-0132">Cell division</keyword>
<keyword id="KW-0238">DNA-binding</keyword>
<keyword id="KW-1185">Reference proteome</keyword>
<comment type="function">
    <text evidence="1">Involved in cell division and chromosome segregation.</text>
</comment>
<comment type="similarity">
    <text evidence="1">Belongs to the WhiA family.</text>
</comment>
<accession>Q1GB32</accession>
<sequence>MASYASEVKKELTSIEVHPEHAKAELAAFLRMNAVLSRHDGQMSLDIVTENPAIARRIFSLIKTAYGFDPQLIVTRKMKLKKNHQYLVRVAQMVSEIMADLEIYSPKKGFITGVPDKIKYSEQRSMSYLRGGFLASGSVNNPETSRYHLEIYCTYANHSQDLQEIMNKYFDLNAKVTARRSGSIVYLKEAEKIGDFLHVVGAVNAMLAFEDLRIMRDMRNSVNRLVNCDTANLRKTAGAAAKQVEDIELIDKKQGLEPLPEKLASLARFRLQHPELSLKELAEQVPDGPISKSGVNHRLKKLHEIAENLR</sequence>
<gene>
    <name evidence="1" type="primary">whiA</name>
    <name type="ordered locus">Ldb0623</name>
</gene>
<dbReference type="EMBL" id="CR954253">
    <property type="protein sequence ID" value="CAI97453.1"/>
    <property type="molecule type" value="Genomic_DNA"/>
</dbReference>
<dbReference type="RefSeq" id="WP_011543731.1">
    <property type="nucleotide sequence ID" value="NC_008054.1"/>
</dbReference>
<dbReference type="SMR" id="Q1GB32"/>
<dbReference type="STRING" id="390333.Ldb0623"/>
<dbReference type="KEGG" id="ldb:Ldb0623"/>
<dbReference type="PATRIC" id="fig|390333.13.peg.175"/>
<dbReference type="eggNOG" id="COG1481">
    <property type="taxonomic scope" value="Bacteria"/>
</dbReference>
<dbReference type="HOGENOM" id="CLU_053282_1_0_9"/>
<dbReference type="BioCyc" id="LDEL390333:LDB_RS02695-MONOMER"/>
<dbReference type="Proteomes" id="UP000001259">
    <property type="component" value="Chromosome"/>
</dbReference>
<dbReference type="GO" id="GO:0003677">
    <property type="term" value="F:DNA binding"/>
    <property type="evidence" value="ECO:0007669"/>
    <property type="project" value="UniProtKB-UniRule"/>
</dbReference>
<dbReference type="GO" id="GO:0051301">
    <property type="term" value="P:cell division"/>
    <property type="evidence" value="ECO:0007669"/>
    <property type="project" value="UniProtKB-UniRule"/>
</dbReference>
<dbReference type="GO" id="GO:0043937">
    <property type="term" value="P:regulation of sporulation"/>
    <property type="evidence" value="ECO:0007669"/>
    <property type="project" value="InterPro"/>
</dbReference>
<dbReference type="Gene3D" id="3.10.28.10">
    <property type="entry name" value="Homing endonucleases"/>
    <property type="match status" value="1"/>
</dbReference>
<dbReference type="HAMAP" id="MF_01420">
    <property type="entry name" value="HTH_type_WhiA"/>
    <property type="match status" value="1"/>
</dbReference>
<dbReference type="InterPro" id="IPR027434">
    <property type="entry name" value="Homing_endonucl"/>
</dbReference>
<dbReference type="InterPro" id="IPR018478">
    <property type="entry name" value="Sporu_reg_WhiA_N_dom"/>
</dbReference>
<dbReference type="InterPro" id="IPR003802">
    <property type="entry name" value="Sporulation_regulator_WhiA"/>
</dbReference>
<dbReference type="InterPro" id="IPR023054">
    <property type="entry name" value="Sporulation_regulator_WhiA_C"/>
</dbReference>
<dbReference type="InterPro" id="IPR039518">
    <property type="entry name" value="WhiA_LAGLIDADG_dom"/>
</dbReference>
<dbReference type="NCBIfam" id="TIGR00647">
    <property type="entry name" value="DNA_bind_WhiA"/>
    <property type="match status" value="1"/>
</dbReference>
<dbReference type="PANTHER" id="PTHR37307">
    <property type="entry name" value="CELL DIVISION PROTEIN WHIA-RELATED"/>
    <property type="match status" value="1"/>
</dbReference>
<dbReference type="PANTHER" id="PTHR37307:SF1">
    <property type="entry name" value="CELL DIVISION PROTEIN WHIA-RELATED"/>
    <property type="match status" value="1"/>
</dbReference>
<dbReference type="Pfam" id="PF02650">
    <property type="entry name" value="HTH_WhiA"/>
    <property type="match status" value="1"/>
</dbReference>
<dbReference type="Pfam" id="PF14527">
    <property type="entry name" value="LAGLIDADG_WhiA"/>
    <property type="match status" value="1"/>
</dbReference>
<dbReference type="Pfam" id="PF10298">
    <property type="entry name" value="WhiA_N"/>
    <property type="match status" value="1"/>
</dbReference>
<dbReference type="SUPFAM" id="SSF55608">
    <property type="entry name" value="Homing endonucleases"/>
    <property type="match status" value="1"/>
</dbReference>
<feature type="chain" id="PRO_0000376497" description="Probable cell division protein WhiA">
    <location>
        <begin position="1"/>
        <end position="310"/>
    </location>
</feature>
<feature type="DNA-binding region" description="H-T-H motif" evidence="1">
    <location>
        <begin position="277"/>
        <end position="310"/>
    </location>
</feature>
<protein>
    <recommendedName>
        <fullName evidence="1">Probable cell division protein WhiA</fullName>
    </recommendedName>
</protein>